<evidence type="ECO:0000255" key="1">
    <source>
        <dbReference type="HAMAP-Rule" id="MF_00518"/>
    </source>
</evidence>
<reference key="1">
    <citation type="journal article" date="2008" name="Genome Biol.">
        <title>Encapsulated in silica: genome, proteome and physiology of the thermophilic bacterium Anoxybacillus flavithermus WK1.</title>
        <authorList>
            <person name="Saw J.H."/>
            <person name="Mountain B.W."/>
            <person name="Feng L."/>
            <person name="Omelchenko M.V."/>
            <person name="Hou S."/>
            <person name="Saito J.A."/>
            <person name="Stott M.B."/>
            <person name="Li D."/>
            <person name="Zhao G."/>
            <person name="Wu J."/>
            <person name="Galperin M.Y."/>
            <person name="Koonin E.V."/>
            <person name="Makarova K.S."/>
            <person name="Wolf Y.I."/>
            <person name="Rigden D.J."/>
            <person name="Dunfield P.F."/>
            <person name="Wang L."/>
            <person name="Alam M."/>
        </authorList>
    </citation>
    <scope>NUCLEOTIDE SEQUENCE [LARGE SCALE GENOMIC DNA]</scope>
    <source>
        <strain>DSM 21510 / WK1</strain>
    </source>
</reference>
<name>DTD_ANOFW</name>
<protein>
    <recommendedName>
        <fullName evidence="1">D-aminoacyl-tRNA deacylase</fullName>
        <shortName evidence="1">DTD</shortName>
        <ecNumber evidence="1">3.1.1.96</ecNumber>
    </recommendedName>
    <alternativeName>
        <fullName evidence="1">Gly-tRNA(Ala) deacylase</fullName>
    </alternativeName>
</protein>
<keyword id="KW-0963">Cytoplasm</keyword>
<keyword id="KW-0378">Hydrolase</keyword>
<keyword id="KW-0694">RNA-binding</keyword>
<keyword id="KW-0820">tRNA-binding</keyword>
<sequence length="146" mass="16070">MRVVVQRAKDAKVTVAGEVVGEIDFGLVLLVGITHDDTEEDAAFVADKIAHLRIFEDEHGKMNVSLIDVGGAILSISQFTLYGDCRKGRRPNFMDAAKPEHAKHIYEAFNEQLRQKGIRVETGVFGAMMDVMLTNVGPVTLIVESK</sequence>
<gene>
    <name evidence="1" type="primary">dtd</name>
    <name type="ordered locus">Aflv_0727</name>
</gene>
<proteinExistence type="inferred from homology"/>
<feature type="chain" id="PRO_1000127489" description="D-aminoacyl-tRNA deacylase">
    <location>
        <begin position="1"/>
        <end position="146"/>
    </location>
</feature>
<feature type="short sequence motif" description="Gly-cisPro motif, important for rejection of L-amino acids" evidence="1">
    <location>
        <begin position="137"/>
        <end position="138"/>
    </location>
</feature>
<organism>
    <name type="scientific">Anoxybacillus flavithermus (strain DSM 21510 / WK1)</name>
    <dbReference type="NCBI Taxonomy" id="491915"/>
    <lineage>
        <taxon>Bacteria</taxon>
        <taxon>Bacillati</taxon>
        <taxon>Bacillota</taxon>
        <taxon>Bacilli</taxon>
        <taxon>Bacillales</taxon>
        <taxon>Anoxybacillaceae</taxon>
        <taxon>Anoxybacillus</taxon>
    </lineage>
</organism>
<dbReference type="EC" id="3.1.1.96" evidence="1"/>
<dbReference type="EMBL" id="CP000922">
    <property type="protein sequence ID" value="ACJ33106.1"/>
    <property type="molecule type" value="Genomic_DNA"/>
</dbReference>
<dbReference type="RefSeq" id="WP_012574408.1">
    <property type="nucleotide sequence ID" value="NC_011567.1"/>
</dbReference>
<dbReference type="SMR" id="B7GFP2"/>
<dbReference type="STRING" id="491915.Aflv_0727"/>
<dbReference type="GeneID" id="7036984"/>
<dbReference type="KEGG" id="afl:Aflv_0727"/>
<dbReference type="PATRIC" id="fig|491915.6.peg.743"/>
<dbReference type="eggNOG" id="COG1490">
    <property type="taxonomic scope" value="Bacteria"/>
</dbReference>
<dbReference type="HOGENOM" id="CLU_076901_1_0_9"/>
<dbReference type="Proteomes" id="UP000000742">
    <property type="component" value="Chromosome"/>
</dbReference>
<dbReference type="GO" id="GO:0005737">
    <property type="term" value="C:cytoplasm"/>
    <property type="evidence" value="ECO:0007669"/>
    <property type="project" value="UniProtKB-SubCell"/>
</dbReference>
<dbReference type="GO" id="GO:0051500">
    <property type="term" value="F:D-tyrosyl-tRNA(Tyr) deacylase activity"/>
    <property type="evidence" value="ECO:0007669"/>
    <property type="project" value="TreeGrafter"/>
</dbReference>
<dbReference type="GO" id="GO:0106026">
    <property type="term" value="F:Gly-tRNA(Ala) deacylase activity"/>
    <property type="evidence" value="ECO:0007669"/>
    <property type="project" value="UniProtKB-UniRule"/>
</dbReference>
<dbReference type="GO" id="GO:0043908">
    <property type="term" value="F:Ser(Gly)-tRNA(Ala) hydrolase activity"/>
    <property type="evidence" value="ECO:0007669"/>
    <property type="project" value="UniProtKB-UniRule"/>
</dbReference>
<dbReference type="GO" id="GO:0000049">
    <property type="term" value="F:tRNA binding"/>
    <property type="evidence" value="ECO:0007669"/>
    <property type="project" value="UniProtKB-UniRule"/>
</dbReference>
<dbReference type="GO" id="GO:0019478">
    <property type="term" value="P:D-amino acid catabolic process"/>
    <property type="evidence" value="ECO:0007669"/>
    <property type="project" value="UniProtKB-UniRule"/>
</dbReference>
<dbReference type="CDD" id="cd00563">
    <property type="entry name" value="Dtyr_deacylase"/>
    <property type="match status" value="1"/>
</dbReference>
<dbReference type="FunFam" id="3.50.80.10:FF:000001">
    <property type="entry name" value="D-aminoacyl-tRNA deacylase"/>
    <property type="match status" value="1"/>
</dbReference>
<dbReference type="Gene3D" id="3.50.80.10">
    <property type="entry name" value="D-tyrosyl-tRNA(Tyr) deacylase"/>
    <property type="match status" value="1"/>
</dbReference>
<dbReference type="HAMAP" id="MF_00518">
    <property type="entry name" value="Deacylase_Dtd"/>
    <property type="match status" value="1"/>
</dbReference>
<dbReference type="InterPro" id="IPR003732">
    <property type="entry name" value="Daa-tRNA_deacyls_DTD"/>
</dbReference>
<dbReference type="InterPro" id="IPR023509">
    <property type="entry name" value="DTD-like_sf"/>
</dbReference>
<dbReference type="NCBIfam" id="TIGR00256">
    <property type="entry name" value="D-aminoacyl-tRNA deacylase"/>
    <property type="match status" value="1"/>
</dbReference>
<dbReference type="PANTHER" id="PTHR10472:SF5">
    <property type="entry name" value="D-AMINOACYL-TRNA DEACYLASE 1"/>
    <property type="match status" value="1"/>
</dbReference>
<dbReference type="PANTHER" id="PTHR10472">
    <property type="entry name" value="D-TYROSYL-TRNA TYR DEACYLASE"/>
    <property type="match status" value="1"/>
</dbReference>
<dbReference type="Pfam" id="PF02580">
    <property type="entry name" value="Tyr_Deacylase"/>
    <property type="match status" value="1"/>
</dbReference>
<dbReference type="SUPFAM" id="SSF69500">
    <property type="entry name" value="DTD-like"/>
    <property type="match status" value="1"/>
</dbReference>
<accession>B7GFP2</accession>
<comment type="function">
    <text evidence="1">An aminoacyl-tRNA editing enzyme that deacylates mischarged D-aminoacyl-tRNAs. Also deacylates mischarged glycyl-tRNA(Ala), protecting cells against glycine mischarging by AlaRS. Acts via tRNA-based rather than protein-based catalysis; rejects L-amino acids rather than detecting D-amino acids in the active site. By recycling D-aminoacyl-tRNA to D-amino acids and free tRNA molecules, this enzyme counteracts the toxicity associated with the formation of D-aminoacyl-tRNA entities in vivo and helps enforce protein L-homochirality.</text>
</comment>
<comment type="catalytic activity">
    <reaction evidence="1">
        <text>glycyl-tRNA(Ala) + H2O = tRNA(Ala) + glycine + H(+)</text>
        <dbReference type="Rhea" id="RHEA:53744"/>
        <dbReference type="Rhea" id="RHEA-COMP:9657"/>
        <dbReference type="Rhea" id="RHEA-COMP:13640"/>
        <dbReference type="ChEBI" id="CHEBI:15377"/>
        <dbReference type="ChEBI" id="CHEBI:15378"/>
        <dbReference type="ChEBI" id="CHEBI:57305"/>
        <dbReference type="ChEBI" id="CHEBI:78442"/>
        <dbReference type="ChEBI" id="CHEBI:78522"/>
        <dbReference type="EC" id="3.1.1.96"/>
    </reaction>
</comment>
<comment type="catalytic activity">
    <reaction evidence="1">
        <text>a D-aminoacyl-tRNA + H2O = a tRNA + a D-alpha-amino acid + H(+)</text>
        <dbReference type="Rhea" id="RHEA:13953"/>
        <dbReference type="Rhea" id="RHEA-COMP:10123"/>
        <dbReference type="Rhea" id="RHEA-COMP:10124"/>
        <dbReference type="ChEBI" id="CHEBI:15377"/>
        <dbReference type="ChEBI" id="CHEBI:15378"/>
        <dbReference type="ChEBI" id="CHEBI:59871"/>
        <dbReference type="ChEBI" id="CHEBI:78442"/>
        <dbReference type="ChEBI" id="CHEBI:79333"/>
        <dbReference type="EC" id="3.1.1.96"/>
    </reaction>
</comment>
<comment type="subunit">
    <text evidence="1">Homodimer.</text>
</comment>
<comment type="subcellular location">
    <subcellularLocation>
        <location evidence="1">Cytoplasm</location>
    </subcellularLocation>
</comment>
<comment type="domain">
    <text evidence="1">A Gly-cisPro motif from one monomer fits into the active site of the other monomer to allow specific chiral rejection of L-amino acids.</text>
</comment>
<comment type="similarity">
    <text evidence="1">Belongs to the DTD family.</text>
</comment>